<evidence type="ECO:0000255" key="1">
    <source>
        <dbReference type="HAMAP-Rule" id="MF_00518"/>
    </source>
</evidence>
<accession>P64001</accession>
<accession>Q99XX4</accession>
<feature type="chain" id="PRO_0000164606" description="D-aminoacyl-tRNA deacylase">
    <location>
        <begin position="1"/>
        <end position="147"/>
    </location>
</feature>
<feature type="short sequence motif" description="Gly-cisPro motif, important for rejection of L-amino acids" evidence="1">
    <location>
        <begin position="136"/>
        <end position="137"/>
    </location>
</feature>
<organism>
    <name type="scientific">Streptococcus pyogenes serotype M18 (strain MGAS8232)</name>
    <dbReference type="NCBI Taxonomy" id="186103"/>
    <lineage>
        <taxon>Bacteria</taxon>
        <taxon>Bacillati</taxon>
        <taxon>Bacillota</taxon>
        <taxon>Bacilli</taxon>
        <taxon>Lactobacillales</taxon>
        <taxon>Streptococcaceae</taxon>
        <taxon>Streptococcus</taxon>
    </lineage>
</organism>
<gene>
    <name evidence="1" type="primary">dtd</name>
    <name type="ordered locus">spyM18_2044</name>
</gene>
<keyword id="KW-0963">Cytoplasm</keyword>
<keyword id="KW-0378">Hydrolase</keyword>
<keyword id="KW-0694">RNA-binding</keyword>
<keyword id="KW-0820">tRNA-binding</keyword>
<name>DTD_STRP8</name>
<proteinExistence type="inferred from homology"/>
<comment type="function">
    <text evidence="1">An aminoacyl-tRNA editing enzyme that deacylates mischarged D-aminoacyl-tRNAs. Also deacylates mischarged glycyl-tRNA(Ala), protecting cells against glycine mischarging by AlaRS. Acts via tRNA-based rather than protein-based catalysis; rejects L-amino acids rather than detecting D-amino acids in the active site. By recycling D-aminoacyl-tRNA to D-amino acids and free tRNA molecules, this enzyme counteracts the toxicity associated with the formation of D-aminoacyl-tRNA entities in vivo and helps enforce protein L-homochirality.</text>
</comment>
<comment type="catalytic activity">
    <reaction evidence="1">
        <text>glycyl-tRNA(Ala) + H2O = tRNA(Ala) + glycine + H(+)</text>
        <dbReference type="Rhea" id="RHEA:53744"/>
        <dbReference type="Rhea" id="RHEA-COMP:9657"/>
        <dbReference type="Rhea" id="RHEA-COMP:13640"/>
        <dbReference type="ChEBI" id="CHEBI:15377"/>
        <dbReference type="ChEBI" id="CHEBI:15378"/>
        <dbReference type="ChEBI" id="CHEBI:57305"/>
        <dbReference type="ChEBI" id="CHEBI:78442"/>
        <dbReference type="ChEBI" id="CHEBI:78522"/>
        <dbReference type="EC" id="3.1.1.96"/>
    </reaction>
</comment>
<comment type="catalytic activity">
    <reaction evidence="1">
        <text>a D-aminoacyl-tRNA + H2O = a tRNA + a D-alpha-amino acid + H(+)</text>
        <dbReference type="Rhea" id="RHEA:13953"/>
        <dbReference type="Rhea" id="RHEA-COMP:10123"/>
        <dbReference type="Rhea" id="RHEA-COMP:10124"/>
        <dbReference type="ChEBI" id="CHEBI:15377"/>
        <dbReference type="ChEBI" id="CHEBI:15378"/>
        <dbReference type="ChEBI" id="CHEBI:59871"/>
        <dbReference type="ChEBI" id="CHEBI:78442"/>
        <dbReference type="ChEBI" id="CHEBI:79333"/>
        <dbReference type="EC" id="3.1.1.96"/>
    </reaction>
</comment>
<comment type="subunit">
    <text evidence="1">Homodimer.</text>
</comment>
<comment type="subcellular location">
    <subcellularLocation>
        <location evidence="1">Cytoplasm</location>
    </subcellularLocation>
</comment>
<comment type="domain">
    <text evidence="1">A Gly-cisPro motif from one monomer fits into the active site of the other monomer to allow specific chiral rejection of L-amino acids.</text>
</comment>
<comment type="similarity">
    <text evidence="1">Belongs to the DTD family.</text>
</comment>
<reference key="1">
    <citation type="journal article" date="2002" name="Proc. Natl. Acad. Sci. U.S.A.">
        <title>Genome sequence and comparative microarray analysis of serotype M18 group A Streptococcus strains associated with acute rheumatic fever outbreaks.</title>
        <authorList>
            <person name="Smoot J.C."/>
            <person name="Barbian K.D."/>
            <person name="Van Gompel J.J."/>
            <person name="Smoot L.M."/>
            <person name="Chaussee M.S."/>
            <person name="Sylva G.L."/>
            <person name="Sturdevant D.E."/>
            <person name="Ricklefs S.M."/>
            <person name="Porcella S.F."/>
            <person name="Parkins L.D."/>
            <person name="Beres S.B."/>
            <person name="Campbell D.S."/>
            <person name="Smith T.M."/>
            <person name="Zhang Q."/>
            <person name="Kapur V."/>
            <person name="Daly J.A."/>
            <person name="Veasy L.G."/>
            <person name="Musser J.M."/>
        </authorList>
    </citation>
    <scope>NUCLEOTIDE SEQUENCE [LARGE SCALE GENOMIC DNA]</scope>
    <source>
        <strain>MGAS8232</strain>
    </source>
</reference>
<protein>
    <recommendedName>
        <fullName evidence="1">D-aminoacyl-tRNA deacylase</fullName>
        <shortName evidence="1">DTD</shortName>
        <ecNumber evidence="1">3.1.1.96</ecNumber>
    </recommendedName>
    <alternativeName>
        <fullName evidence="1">Gly-tRNA(Ala) deacylase</fullName>
    </alternativeName>
</protein>
<dbReference type="EC" id="3.1.1.96" evidence="1"/>
<dbReference type="EMBL" id="AE009949">
    <property type="protein sequence ID" value="AAL98518.1"/>
    <property type="molecule type" value="Genomic_DNA"/>
</dbReference>
<dbReference type="RefSeq" id="WP_010922691.1">
    <property type="nucleotide sequence ID" value="NC_003485.1"/>
</dbReference>
<dbReference type="SMR" id="P64001"/>
<dbReference type="KEGG" id="spm:spyM18_2044"/>
<dbReference type="HOGENOM" id="CLU_076901_1_0_9"/>
<dbReference type="GO" id="GO:0005737">
    <property type="term" value="C:cytoplasm"/>
    <property type="evidence" value="ECO:0007669"/>
    <property type="project" value="UniProtKB-SubCell"/>
</dbReference>
<dbReference type="GO" id="GO:0051500">
    <property type="term" value="F:D-tyrosyl-tRNA(Tyr) deacylase activity"/>
    <property type="evidence" value="ECO:0007669"/>
    <property type="project" value="TreeGrafter"/>
</dbReference>
<dbReference type="GO" id="GO:0106026">
    <property type="term" value="F:Gly-tRNA(Ala) deacylase activity"/>
    <property type="evidence" value="ECO:0007669"/>
    <property type="project" value="UniProtKB-UniRule"/>
</dbReference>
<dbReference type="GO" id="GO:0043908">
    <property type="term" value="F:Ser(Gly)-tRNA(Ala) hydrolase activity"/>
    <property type="evidence" value="ECO:0007669"/>
    <property type="project" value="UniProtKB-UniRule"/>
</dbReference>
<dbReference type="GO" id="GO:0000049">
    <property type="term" value="F:tRNA binding"/>
    <property type="evidence" value="ECO:0007669"/>
    <property type="project" value="UniProtKB-UniRule"/>
</dbReference>
<dbReference type="GO" id="GO:0019478">
    <property type="term" value="P:D-amino acid catabolic process"/>
    <property type="evidence" value="ECO:0007669"/>
    <property type="project" value="UniProtKB-UniRule"/>
</dbReference>
<dbReference type="CDD" id="cd00563">
    <property type="entry name" value="Dtyr_deacylase"/>
    <property type="match status" value="1"/>
</dbReference>
<dbReference type="FunFam" id="3.50.80.10:FF:000001">
    <property type="entry name" value="D-aminoacyl-tRNA deacylase"/>
    <property type="match status" value="1"/>
</dbReference>
<dbReference type="Gene3D" id="3.50.80.10">
    <property type="entry name" value="D-tyrosyl-tRNA(Tyr) deacylase"/>
    <property type="match status" value="1"/>
</dbReference>
<dbReference type="HAMAP" id="MF_00518">
    <property type="entry name" value="Deacylase_Dtd"/>
    <property type="match status" value="1"/>
</dbReference>
<dbReference type="InterPro" id="IPR003732">
    <property type="entry name" value="Daa-tRNA_deacyls_DTD"/>
</dbReference>
<dbReference type="InterPro" id="IPR023509">
    <property type="entry name" value="DTD-like_sf"/>
</dbReference>
<dbReference type="NCBIfam" id="TIGR00256">
    <property type="entry name" value="D-aminoacyl-tRNA deacylase"/>
    <property type="match status" value="1"/>
</dbReference>
<dbReference type="PANTHER" id="PTHR10472:SF5">
    <property type="entry name" value="D-AMINOACYL-TRNA DEACYLASE 1"/>
    <property type="match status" value="1"/>
</dbReference>
<dbReference type="PANTHER" id="PTHR10472">
    <property type="entry name" value="D-TYROSYL-TRNA TYR DEACYLASE"/>
    <property type="match status" value="1"/>
</dbReference>
<dbReference type="Pfam" id="PF02580">
    <property type="entry name" value="Tyr_Deacylase"/>
    <property type="match status" value="1"/>
</dbReference>
<dbReference type="SUPFAM" id="SSF69500">
    <property type="entry name" value="DTD-like"/>
    <property type="match status" value="1"/>
</dbReference>
<sequence>MKLVLQRVKEASVSIDGKIAGAINQGLLLLVGVGPDDNAEDLAYAVRKIVNMRIFSDADGKMNQSIQDIKGSILSVSQFTLYADTKKGNRPAFTGAAKPDLASQLYDSFNEQLAEFVPVERGVFGADMQVSLINDGPVTIILDTKCH</sequence>